<gene>
    <name type="primary">TMEM59</name>
</gene>
<evidence type="ECO:0000250" key="1">
    <source>
        <dbReference type="UniProtKB" id="Q9BXS4"/>
    </source>
</evidence>
<evidence type="ECO:0000255" key="2"/>
<evidence type="ECO:0000305" key="3"/>
<accession>Q2F7Z7</accession>
<organism>
    <name type="scientific">Sus scrofa</name>
    <name type="common">Pig</name>
    <dbReference type="NCBI Taxonomy" id="9823"/>
    <lineage>
        <taxon>Eukaryota</taxon>
        <taxon>Metazoa</taxon>
        <taxon>Chordata</taxon>
        <taxon>Craniata</taxon>
        <taxon>Vertebrata</taxon>
        <taxon>Euteleostomi</taxon>
        <taxon>Mammalia</taxon>
        <taxon>Eutheria</taxon>
        <taxon>Laurasiatheria</taxon>
        <taxon>Artiodactyla</taxon>
        <taxon>Suina</taxon>
        <taxon>Suidae</taxon>
        <taxon>Sus</taxon>
    </lineage>
</organism>
<sequence>MAAPKGSLWVRAQLGLLPLLLLTMALAGGPGTASAEAFDSVLGDTASCHRACQLTYPLHTYPKEEELYACQRGCRLFSICQFVDDGIDLNRTKLECESACTEAYSQSDEQYACHLGCQNQLPFAELRQEQLMSLMPKMHLLFPLTLVRSFWSDVMDSAQSFITSSWTFYLQADDGKIVIFQSKPEIQYAPQLEQEPTNLKESSLSKMSYLQMRSSQAHRNYLEDGENDGFLRCLSLNSGWILTMTLVLSVMVLLWICCATVATAVEQYVPSEKLSIYGDLEFVNEQKLNRYPASSLVLVRSKAEDHDEAGPLPTKVNLAHSEI</sequence>
<feature type="signal peptide" evidence="2">
    <location>
        <begin position="1"/>
        <end position="35"/>
    </location>
</feature>
<feature type="chain" id="PRO_0000282918" description="Transmembrane protein 59">
    <location>
        <begin position="36"/>
        <end position="323"/>
    </location>
</feature>
<feature type="topological domain" description="Extracellular" evidence="2">
    <location>
        <begin position="36"/>
        <end position="238"/>
    </location>
</feature>
<feature type="transmembrane region" description="Helical" evidence="2">
    <location>
        <begin position="239"/>
        <end position="259"/>
    </location>
</feature>
<feature type="topological domain" description="Cytoplasmic" evidence="2">
    <location>
        <begin position="260"/>
        <end position="323"/>
    </location>
</feature>
<feature type="short sequence motif" description="ATG16L1-binding motif" evidence="1">
    <location>
        <begin position="263"/>
        <end position="281"/>
    </location>
</feature>
<feature type="glycosylation site" description="N-linked (GlcNAc...) asparagine" evidence="2">
    <location>
        <position position="90"/>
    </location>
</feature>
<keyword id="KW-0072">Autophagy</keyword>
<keyword id="KW-1003">Cell membrane</keyword>
<keyword id="KW-0967">Endosome</keyword>
<keyword id="KW-0325">Glycoprotein</keyword>
<keyword id="KW-0333">Golgi apparatus</keyword>
<keyword id="KW-0458">Lysosome</keyword>
<keyword id="KW-0472">Membrane</keyword>
<keyword id="KW-1185">Reference proteome</keyword>
<keyword id="KW-0732">Signal</keyword>
<keyword id="KW-0812">Transmembrane</keyword>
<keyword id="KW-1133">Transmembrane helix</keyword>
<protein>
    <recommendedName>
        <fullName>Transmembrane protein 59</fullName>
    </recommendedName>
</protein>
<proteinExistence type="evidence at transcript level"/>
<name>TMM59_PIG</name>
<comment type="function">
    <text evidence="1">Acts as a regulator of autophagy in response to S.aureus infection by promoting activation of LC3 (MAP1LC3A, MAP1LC3B or MAP1LC3C). Acts by interacting with ATG16L1, leading to promote a functional complex between LC3 and ATG16L1 and promoting LC3 lipidation and subsequent activation of autophagy. Modulates the O-glycosylation and complex N-glycosylation steps occurring during the Golgi maturation of several proteins such as APP, BACE1, SEAP or PRNP. Inhibits APP transport to the cell surface and further shedding.</text>
</comment>
<comment type="subunit">
    <text evidence="1">Interacts with ATG16L1 (via WD repeats).</text>
</comment>
<comment type="subcellular location">
    <subcellularLocation>
        <location evidence="1">Late endosome membrane</location>
        <topology evidence="2">Single-pass type I membrane protein</topology>
    </subcellularLocation>
    <subcellularLocation>
        <location evidence="1">Lysosome membrane</location>
        <topology evidence="2">Single-pass type I membrane protein</topology>
    </subcellularLocation>
    <subcellularLocation>
        <location evidence="1">Cell membrane</location>
        <topology evidence="2">Single-pass type I membrane protein</topology>
    </subcellularLocation>
    <subcellularLocation>
        <location evidence="1">Golgi apparatus membrane</location>
        <topology evidence="2">Single-pass type I membrane protein</topology>
    </subcellularLocation>
    <text evidence="1">Mainly localizes to late endosomes/lysosomes. Probably first exported to the cell surface and then actively endocytosed to transiently localize in early endosomes on its way to the late endosomal/lysosomal compartment where it becomes quickly degraded.</text>
</comment>
<comment type="domain">
    <text evidence="1">The ATG16L1-binding motif mediates interaction with ATG16L1 and promotes autophagy.</text>
</comment>
<comment type="PTM">
    <text evidence="1">N-glycosylated.</text>
</comment>
<comment type="similarity">
    <text evidence="3">Belongs to the TMEM59 family.</text>
</comment>
<reference key="1">
    <citation type="journal article" date="2006" name="Cytogenet. Genome Res.">
        <title>Assignment of CRSP9, ETF1 and TMEM59 genes to porcine chromosomes.</title>
        <authorList>
            <person name="Shao M.Y."/>
            <person name="Wang H."/>
            <person name="Zhu Z.M."/>
            <person name="Yang S.L."/>
            <person name="Li K."/>
        </authorList>
    </citation>
    <scope>NUCLEOTIDE SEQUENCE [MRNA]</scope>
</reference>
<dbReference type="EMBL" id="DQ200860">
    <property type="protein sequence ID" value="ABB02673.1"/>
    <property type="molecule type" value="mRNA"/>
</dbReference>
<dbReference type="RefSeq" id="NP_001038023.1">
    <property type="nucleotide sequence ID" value="NM_001044558.1"/>
</dbReference>
<dbReference type="FunCoup" id="Q2F7Z7">
    <property type="interactions" value="817"/>
</dbReference>
<dbReference type="STRING" id="9823.ENSSSCP00000071398"/>
<dbReference type="GlyCosmos" id="Q2F7Z7">
    <property type="glycosylation" value="1 site, No reported glycans"/>
</dbReference>
<dbReference type="GlyGen" id="Q2F7Z7">
    <property type="glycosylation" value="1 site"/>
</dbReference>
<dbReference type="PaxDb" id="9823-ENSSSCP00000024879"/>
<dbReference type="PeptideAtlas" id="Q2F7Z7"/>
<dbReference type="Ensembl" id="ENSSSCT00000041684.3">
    <property type="protein sequence ID" value="ENSSSCP00000031478.1"/>
    <property type="gene ID" value="ENSSSCG00000034261.3"/>
</dbReference>
<dbReference type="Ensembl" id="ENSSSCT00025014604.1">
    <property type="protein sequence ID" value="ENSSSCP00025005661.1"/>
    <property type="gene ID" value="ENSSSCG00025011068.1"/>
</dbReference>
<dbReference type="Ensembl" id="ENSSSCT00030094153.1">
    <property type="protein sequence ID" value="ENSSSCP00030043402.1"/>
    <property type="gene ID" value="ENSSSCG00030067255.1"/>
</dbReference>
<dbReference type="Ensembl" id="ENSSSCT00035067306.1">
    <property type="protein sequence ID" value="ENSSSCP00035027290.1"/>
    <property type="gene ID" value="ENSSSCG00035050496.1"/>
</dbReference>
<dbReference type="Ensembl" id="ENSSSCT00040035801.1">
    <property type="protein sequence ID" value="ENSSSCP00040014836.1"/>
    <property type="gene ID" value="ENSSSCG00040026664.1"/>
</dbReference>
<dbReference type="Ensembl" id="ENSSSCT00045038678.1">
    <property type="protein sequence ID" value="ENSSSCP00045026890.1"/>
    <property type="gene ID" value="ENSSSCG00045022582.1"/>
</dbReference>
<dbReference type="Ensembl" id="ENSSSCT00050033480.1">
    <property type="protein sequence ID" value="ENSSSCP00050013931.1"/>
    <property type="gene ID" value="ENSSSCG00050024849.1"/>
</dbReference>
<dbReference type="Ensembl" id="ENSSSCT00055053842.1">
    <property type="protein sequence ID" value="ENSSSCP00055042959.1"/>
    <property type="gene ID" value="ENSSSCG00055027165.1"/>
</dbReference>
<dbReference type="Ensembl" id="ENSSSCT00065108326.1">
    <property type="protein sequence ID" value="ENSSSCP00065048399.1"/>
    <property type="gene ID" value="ENSSSCG00065077962.1"/>
</dbReference>
<dbReference type="Ensembl" id="ENSSSCT00070060574.1">
    <property type="protein sequence ID" value="ENSSSCP00070051618.1"/>
    <property type="gene ID" value="ENSSSCG00070030122.1"/>
</dbReference>
<dbReference type="Ensembl" id="ENSSSCT00085016565">
    <property type="protein sequence ID" value="ENSSSCP00085011785"/>
    <property type="gene ID" value="ENSSSCG00085008760"/>
</dbReference>
<dbReference type="Ensembl" id="ENSSSCT00090052448">
    <property type="protein sequence ID" value="ENSSSCP00090032719"/>
    <property type="gene ID" value="ENSSSCG00090029596"/>
</dbReference>
<dbReference type="Ensembl" id="ENSSSCT00105064517">
    <property type="protein sequence ID" value="ENSSSCP00105045915"/>
    <property type="gene ID" value="ENSSSCG00105033805"/>
</dbReference>
<dbReference type="Ensembl" id="ENSSSCT00110010035">
    <property type="protein sequence ID" value="ENSSSCP00110007051"/>
    <property type="gene ID" value="ENSSSCG00110005124"/>
</dbReference>
<dbReference type="Ensembl" id="ENSSSCT00115028745">
    <property type="protein sequence ID" value="ENSSSCP00115027272"/>
    <property type="gene ID" value="ENSSSCG00115016414"/>
</dbReference>
<dbReference type="Ensembl" id="ENSSSCT00130034412">
    <property type="protein sequence ID" value="ENSSSCP00130023795"/>
    <property type="gene ID" value="ENSSSCG00130017591"/>
</dbReference>
<dbReference type="GeneID" id="733610"/>
<dbReference type="KEGG" id="ssc:733610"/>
<dbReference type="CTD" id="9528"/>
<dbReference type="VGNC" id="VGNC:94192">
    <property type="gene designation" value="TMEM59"/>
</dbReference>
<dbReference type="eggNOG" id="ENOG502QUIS">
    <property type="taxonomic scope" value="Eukaryota"/>
</dbReference>
<dbReference type="GeneTree" id="ENSGT00390000008279"/>
<dbReference type="HOGENOM" id="CLU_059747_1_0_1"/>
<dbReference type="InParanoid" id="Q2F7Z7"/>
<dbReference type="OMA" id="MGCHNQL"/>
<dbReference type="OrthoDB" id="6371519at2759"/>
<dbReference type="TreeFam" id="TF331226"/>
<dbReference type="Reactome" id="R-SSC-9013407">
    <property type="pathway name" value="RHOH GTPase cycle"/>
</dbReference>
<dbReference type="Reactome" id="R-SSC-9696273">
    <property type="pathway name" value="RND1 GTPase cycle"/>
</dbReference>
<dbReference type="Proteomes" id="UP000008227">
    <property type="component" value="Chromosome 6"/>
</dbReference>
<dbReference type="Proteomes" id="UP000314985">
    <property type="component" value="Chromosome 6"/>
</dbReference>
<dbReference type="Proteomes" id="UP000694570">
    <property type="component" value="Unplaced"/>
</dbReference>
<dbReference type="Proteomes" id="UP000694571">
    <property type="component" value="Unplaced"/>
</dbReference>
<dbReference type="Proteomes" id="UP000694720">
    <property type="component" value="Unplaced"/>
</dbReference>
<dbReference type="Proteomes" id="UP000694722">
    <property type="component" value="Unplaced"/>
</dbReference>
<dbReference type="Proteomes" id="UP000694723">
    <property type="component" value="Unplaced"/>
</dbReference>
<dbReference type="Proteomes" id="UP000694724">
    <property type="component" value="Unplaced"/>
</dbReference>
<dbReference type="Proteomes" id="UP000694725">
    <property type="component" value="Unplaced"/>
</dbReference>
<dbReference type="Proteomes" id="UP000694726">
    <property type="component" value="Unplaced"/>
</dbReference>
<dbReference type="Proteomes" id="UP000694727">
    <property type="component" value="Unplaced"/>
</dbReference>
<dbReference type="Proteomes" id="UP000694728">
    <property type="component" value="Unplaced"/>
</dbReference>
<dbReference type="Bgee" id="ENSSSCG00000034261">
    <property type="expression patterns" value="Expressed in ovary and 43 other cell types or tissues"/>
</dbReference>
<dbReference type="ExpressionAtlas" id="Q2F7Z7">
    <property type="expression patterns" value="baseline and differential"/>
</dbReference>
<dbReference type="GO" id="GO:0000139">
    <property type="term" value="C:Golgi membrane"/>
    <property type="evidence" value="ECO:0007669"/>
    <property type="project" value="UniProtKB-SubCell"/>
</dbReference>
<dbReference type="GO" id="GO:0005770">
    <property type="term" value="C:late endosome"/>
    <property type="evidence" value="ECO:0000250"/>
    <property type="project" value="UniProtKB"/>
</dbReference>
<dbReference type="GO" id="GO:0031902">
    <property type="term" value="C:late endosome membrane"/>
    <property type="evidence" value="ECO:0007669"/>
    <property type="project" value="UniProtKB-SubCell"/>
</dbReference>
<dbReference type="GO" id="GO:0005765">
    <property type="term" value="C:lysosomal membrane"/>
    <property type="evidence" value="ECO:0007669"/>
    <property type="project" value="UniProtKB-SubCell"/>
</dbReference>
<dbReference type="GO" id="GO:0005764">
    <property type="term" value="C:lysosome"/>
    <property type="evidence" value="ECO:0000250"/>
    <property type="project" value="UniProtKB"/>
</dbReference>
<dbReference type="GO" id="GO:0005886">
    <property type="term" value="C:plasma membrane"/>
    <property type="evidence" value="ECO:0007669"/>
    <property type="project" value="UniProtKB-SubCell"/>
</dbReference>
<dbReference type="GO" id="GO:0006914">
    <property type="term" value="P:autophagy"/>
    <property type="evidence" value="ECO:0007669"/>
    <property type="project" value="UniProtKB-KW"/>
</dbReference>
<dbReference type="GO" id="GO:0010508">
    <property type="term" value="P:positive regulation of autophagy"/>
    <property type="evidence" value="ECO:0000250"/>
    <property type="project" value="UniProtKB"/>
</dbReference>
<dbReference type="InterPro" id="IPR022065">
    <property type="entry name" value="Uncharacterised_TMEM59"/>
</dbReference>
<dbReference type="PANTHER" id="PTHR28652:SF3">
    <property type="entry name" value="TRANSMEMBRANE PROTEIN 59"/>
    <property type="match status" value="1"/>
</dbReference>
<dbReference type="PANTHER" id="PTHR28652">
    <property type="entry name" value="TRANSMEMBRANE PROTEIN 59-LIKE PROTEIN"/>
    <property type="match status" value="1"/>
</dbReference>
<dbReference type="Pfam" id="PF12280">
    <property type="entry name" value="BSMAP"/>
    <property type="match status" value="1"/>
</dbReference>